<keyword id="KW-1015">Disulfide bond</keyword>
<keyword id="KW-0960">Knottin</keyword>
<keyword id="KW-0964">Secreted</keyword>
<keyword id="KW-0732">Signal</keyword>
<keyword id="KW-0800">Toxin</keyword>
<feature type="signal peptide" evidence="2">
    <location>
        <begin position="1"/>
        <end position="20"/>
    </location>
</feature>
<feature type="propeptide" id="PRO_0000401647" evidence="1">
    <location>
        <begin position="21"/>
        <end position="44"/>
    </location>
</feature>
<feature type="chain" id="PRO_0000401648" description="U3-lycotoxin-Ls1g">
    <location>
        <begin position="45"/>
        <end position="115"/>
    </location>
</feature>
<feature type="disulfide bond" evidence="1">
    <location>
        <begin position="48"/>
        <end position="63"/>
    </location>
</feature>
<feature type="disulfide bond" evidence="1">
    <location>
        <begin position="55"/>
        <end position="72"/>
    </location>
</feature>
<feature type="disulfide bond" evidence="1">
    <location>
        <begin position="62"/>
        <end position="87"/>
    </location>
</feature>
<feature type="disulfide bond" evidence="1">
    <location>
        <begin position="74"/>
        <end position="85"/>
    </location>
</feature>
<protein>
    <recommendedName>
        <fullName>U3-lycotoxin-Ls1g</fullName>
    </recommendedName>
    <alternativeName>
        <fullName>Toxin-like structure LSTX-B21</fullName>
    </alternativeName>
</protein>
<evidence type="ECO:0000250" key="1"/>
<evidence type="ECO:0000255" key="2"/>
<evidence type="ECO:0000305" key="3"/>
<proteinExistence type="evidence at transcript level"/>
<accession>B6DCR6</accession>
<organism>
    <name type="scientific">Lycosa singoriensis</name>
    <name type="common">Wolf spider</name>
    <name type="synonym">Aranea singoriensis</name>
    <dbReference type="NCBI Taxonomy" id="434756"/>
    <lineage>
        <taxon>Eukaryota</taxon>
        <taxon>Metazoa</taxon>
        <taxon>Ecdysozoa</taxon>
        <taxon>Arthropoda</taxon>
        <taxon>Chelicerata</taxon>
        <taxon>Arachnida</taxon>
        <taxon>Araneae</taxon>
        <taxon>Araneomorphae</taxon>
        <taxon>Entelegynae</taxon>
        <taxon>Lycosoidea</taxon>
        <taxon>Lycosidae</taxon>
        <taxon>Lycosa</taxon>
    </lineage>
</organism>
<dbReference type="EMBL" id="EU926000">
    <property type="protein sequence ID" value="ACI41332.1"/>
    <property type="molecule type" value="mRNA"/>
</dbReference>
<dbReference type="EMBL" id="FM864004">
    <property type="protein sequence ID" value="CAS03602.1"/>
    <property type="molecule type" value="mRNA"/>
</dbReference>
<dbReference type="SMR" id="B6DCR6"/>
<dbReference type="ArachnoServer" id="AS000949">
    <property type="toxin name" value="U3-lycotoxin-Ls1g"/>
</dbReference>
<dbReference type="GO" id="GO:0005576">
    <property type="term" value="C:extracellular region"/>
    <property type="evidence" value="ECO:0007669"/>
    <property type="project" value="UniProtKB-SubCell"/>
</dbReference>
<dbReference type="GO" id="GO:0090729">
    <property type="term" value="F:toxin activity"/>
    <property type="evidence" value="ECO:0007669"/>
    <property type="project" value="UniProtKB-KW"/>
</dbReference>
<dbReference type="InterPro" id="IPR019553">
    <property type="entry name" value="Spider_toxin_CSTX_knottin"/>
</dbReference>
<dbReference type="InterPro" id="IPR011142">
    <property type="entry name" value="Spider_toxin_CSTX_Knottin_CS"/>
</dbReference>
<dbReference type="Pfam" id="PF10530">
    <property type="entry name" value="Toxin_35"/>
    <property type="match status" value="1"/>
</dbReference>
<dbReference type="PROSITE" id="PS60029">
    <property type="entry name" value="SPIDER_CSTX"/>
    <property type="match status" value="1"/>
</dbReference>
<reference key="1">
    <citation type="journal article" date="2010" name="Zoology">
        <title>Transcriptome analysis of the venom glands of the Chinese wolf spider Lycosa singoriensis.</title>
        <authorList>
            <person name="Zhang Y."/>
            <person name="Chen J."/>
            <person name="Tang X."/>
            <person name="Wang F."/>
            <person name="Jiang L."/>
            <person name="Xiong X."/>
            <person name="Wang M."/>
            <person name="Rong M."/>
            <person name="Liu Z."/>
            <person name="Liang S."/>
        </authorList>
    </citation>
    <scope>NUCLEOTIDE SEQUENCE [LARGE SCALE MRNA]</scope>
    <source>
        <tissue>Venom gland</tissue>
    </source>
</reference>
<sequence length="115" mass="13346">MKFVLLFGVFLVTLFSYSSAEMLDDFDQADEDELLSLIEKEEARAKECTPRFYDCSHDRHSCCRSELFKDVCTCFYPEGGDNEVCTCQRPKHLKYMEKAADKAKKFGGKIKKWFG</sequence>
<comment type="subcellular location">
    <subcellularLocation>
        <location evidence="1">Secreted</location>
    </subcellularLocation>
</comment>
<comment type="tissue specificity">
    <text>Expressed by the venom gland.</text>
</comment>
<comment type="domain">
    <text evidence="1">The presence of a 'disulfide through disulfide knot' structurally defines this protein as a knottin.</text>
</comment>
<comment type="similarity">
    <text evidence="3">Belongs to the neurotoxin 19 (CSTX) family. 01 subfamily.</text>
</comment>
<name>TX321_LYCSI</name>